<dbReference type="EMBL" id="Y13304">
    <property type="protein sequence ID" value="CAA73740.1"/>
    <property type="molecule type" value="Genomic_DNA"/>
</dbReference>
<dbReference type="EMBL" id="Y13305">
    <property type="protein sequence ID" value="CAA73741.1"/>
    <property type="molecule type" value="Genomic_DNA"/>
</dbReference>
<dbReference type="SMR" id="O48321"/>
<dbReference type="GO" id="GO:0005743">
    <property type="term" value="C:mitochondrial inner membrane"/>
    <property type="evidence" value="ECO:0007669"/>
    <property type="project" value="UniProtKB-SubCell"/>
</dbReference>
<dbReference type="GO" id="GO:0045275">
    <property type="term" value="C:respiratory chain complex III"/>
    <property type="evidence" value="ECO:0007669"/>
    <property type="project" value="InterPro"/>
</dbReference>
<dbReference type="GO" id="GO:0046872">
    <property type="term" value="F:metal ion binding"/>
    <property type="evidence" value="ECO:0007669"/>
    <property type="project" value="UniProtKB-KW"/>
</dbReference>
<dbReference type="GO" id="GO:0008121">
    <property type="term" value="F:ubiquinol-cytochrome-c reductase activity"/>
    <property type="evidence" value="ECO:0007669"/>
    <property type="project" value="InterPro"/>
</dbReference>
<dbReference type="GO" id="GO:0006122">
    <property type="term" value="P:mitochondrial electron transport, ubiquinol to cytochrome c"/>
    <property type="evidence" value="ECO:0007669"/>
    <property type="project" value="TreeGrafter"/>
</dbReference>
<dbReference type="CDD" id="cd00290">
    <property type="entry name" value="cytochrome_b_C"/>
    <property type="match status" value="1"/>
</dbReference>
<dbReference type="CDD" id="cd00284">
    <property type="entry name" value="Cytochrome_b_N"/>
    <property type="match status" value="1"/>
</dbReference>
<dbReference type="FunFam" id="1.20.810.10:FF:000002">
    <property type="entry name" value="Cytochrome b"/>
    <property type="match status" value="1"/>
</dbReference>
<dbReference type="Gene3D" id="1.20.810.10">
    <property type="entry name" value="Cytochrome Bc1 Complex, Chain C"/>
    <property type="match status" value="1"/>
</dbReference>
<dbReference type="InterPro" id="IPR005798">
    <property type="entry name" value="Cyt_b/b6_C"/>
</dbReference>
<dbReference type="InterPro" id="IPR036150">
    <property type="entry name" value="Cyt_b/b6_C_sf"/>
</dbReference>
<dbReference type="InterPro" id="IPR005797">
    <property type="entry name" value="Cyt_b/b6_N"/>
</dbReference>
<dbReference type="InterPro" id="IPR027387">
    <property type="entry name" value="Cytb/b6-like_sf"/>
</dbReference>
<dbReference type="InterPro" id="IPR030689">
    <property type="entry name" value="Cytochrome_b"/>
</dbReference>
<dbReference type="InterPro" id="IPR048260">
    <property type="entry name" value="Cytochrome_b_C_euk/bac"/>
</dbReference>
<dbReference type="InterPro" id="IPR048259">
    <property type="entry name" value="Cytochrome_b_N_euk/bac"/>
</dbReference>
<dbReference type="InterPro" id="IPR016174">
    <property type="entry name" value="Di-haem_cyt_TM"/>
</dbReference>
<dbReference type="PANTHER" id="PTHR19271">
    <property type="entry name" value="CYTOCHROME B"/>
    <property type="match status" value="1"/>
</dbReference>
<dbReference type="PANTHER" id="PTHR19271:SF16">
    <property type="entry name" value="CYTOCHROME B"/>
    <property type="match status" value="1"/>
</dbReference>
<dbReference type="Pfam" id="PF00032">
    <property type="entry name" value="Cytochrom_B_C"/>
    <property type="match status" value="1"/>
</dbReference>
<dbReference type="Pfam" id="PF00033">
    <property type="entry name" value="Cytochrome_B"/>
    <property type="match status" value="1"/>
</dbReference>
<dbReference type="PIRSF" id="PIRSF038885">
    <property type="entry name" value="COB"/>
    <property type="match status" value="1"/>
</dbReference>
<dbReference type="SUPFAM" id="SSF81648">
    <property type="entry name" value="a domain/subunit of cytochrome bc1 complex (Ubiquinol-cytochrome c reductase)"/>
    <property type="match status" value="1"/>
</dbReference>
<dbReference type="SUPFAM" id="SSF81342">
    <property type="entry name" value="Transmembrane di-heme cytochromes"/>
    <property type="match status" value="1"/>
</dbReference>
<dbReference type="PROSITE" id="PS51003">
    <property type="entry name" value="CYTB_CTER"/>
    <property type="match status" value="1"/>
</dbReference>
<dbReference type="PROSITE" id="PS51002">
    <property type="entry name" value="CYTB_NTER"/>
    <property type="match status" value="1"/>
</dbReference>
<geneLocation type="mitochondrion"/>
<accession>O48321</accession>
<keyword id="KW-0249">Electron transport</keyword>
<keyword id="KW-0349">Heme</keyword>
<keyword id="KW-0408">Iron</keyword>
<keyword id="KW-0472">Membrane</keyword>
<keyword id="KW-0479">Metal-binding</keyword>
<keyword id="KW-0496">Mitochondrion</keyword>
<keyword id="KW-0999">Mitochondrion inner membrane</keyword>
<keyword id="KW-0679">Respiratory chain</keyword>
<keyword id="KW-0812">Transmembrane</keyword>
<keyword id="KW-1133">Transmembrane helix</keyword>
<keyword id="KW-0813">Transport</keyword>
<keyword id="KW-0830">Ubiquinone</keyword>
<feature type="chain" id="PRO_0000060699" description="Cytochrome b">
    <location>
        <begin position="1"/>
        <end position="380"/>
    </location>
</feature>
<feature type="transmembrane region" description="Helical" evidence="2">
    <location>
        <begin position="33"/>
        <end position="53"/>
    </location>
</feature>
<feature type="transmembrane region" description="Helical" evidence="2">
    <location>
        <begin position="77"/>
        <end position="98"/>
    </location>
</feature>
<feature type="transmembrane region" description="Helical" evidence="2">
    <location>
        <begin position="113"/>
        <end position="133"/>
    </location>
</feature>
<feature type="transmembrane region" description="Helical" evidence="2">
    <location>
        <begin position="178"/>
        <end position="198"/>
    </location>
</feature>
<feature type="transmembrane region" description="Helical" evidence="2">
    <location>
        <begin position="226"/>
        <end position="246"/>
    </location>
</feature>
<feature type="transmembrane region" description="Helical" evidence="2">
    <location>
        <begin position="288"/>
        <end position="308"/>
    </location>
</feature>
<feature type="transmembrane region" description="Helical" evidence="2">
    <location>
        <begin position="320"/>
        <end position="340"/>
    </location>
</feature>
<feature type="transmembrane region" description="Helical" evidence="2">
    <location>
        <begin position="347"/>
        <end position="367"/>
    </location>
</feature>
<feature type="binding site" description="axial binding residue" evidence="2">
    <location>
        <position position="83"/>
    </location>
    <ligand>
        <name>heme b</name>
        <dbReference type="ChEBI" id="CHEBI:60344"/>
        <label>b562</label>
    </ligand>
    <ligandPart>
        <name>Fe</name>
        <dbReference type="ChEBI" id="CHEBI:18248"/>
    </ligandPart>
</feature>
<feature type="binding site" description="axial binding residue" evidence="2">
    <location>
        <position position="97"/>
    </location>
    <ligand>
        <name>heme b</name>
        <dbReference type="ChEBI" id="CHEBI:60344"/>
        <label>b566</label>
    </ligand>
    <ligandPart>
        <name>Fe</name>
        <dbReference type="ChEBI" id="CHEBI:18248"/>
    </ligandPart>
</feature>
<feature type="binding site" description="axial binding residue" evidence="2">
    <location>
        <position position="182"/>
    </location>
    <ligand>
        <name>heme b</name>
        <dbReference type="ChEBI" id="CHEBI:60344"/>
        <label>b562</label>
    </ligand>
    <ligandPart>
        <name>Fe</name>
        <dbReference type="ChEBI" id="CHEBI:18248"/>
    </ligandPart>
</feature>
<feature type="binding site" description="axial binding residue" evidence="2">
    <location>
        <position position="196"/>
    </location>
    <ligand>
        <name>heme b</name>
        <dbReference type="ChEBI" id="CHEBI:60344"/>
        <label>b566</label>
    </ligand>
    <ligandPart>
        <name>Fe</name>
        <dbReference type="ChEBI" id="CHEBI:18248"/>
    </ligandPart>
</feature>
<feature type="binding site" evidence="2">
    <location>
        <position position="201"/>
    </location>
    <ligand>
        <name>a ubiquinone</name>
        <dbReference type="ChEBI" id="CHEBI:16389"/>
    </ligand>
</feature>
<proteinExistence type="inferred from homology"/>
<protein>
    <recommendedName>
        <fullName>Cytochrome b</fullName>
    </recommendedName>
    <alternativeName>
        <fullName>Complex III subunit 3</fullName>
    </alternativeName>
    <alternativeName>
        <fullName>Complex III subunit III</fullName>
    </alternativeName>
    <alternativeName>
        <fullName>Cytochrome b-c1 complex subunit 3</fullName>
    </alternativeName>
    <alternativeName>
        <fullName>Ubiquinol-cytochrome-c reductase complex cytochrome b subunit</fullName>
    </alternativeName>
</protein>
<name>CYB_HOOHO</name>
<evidence type="ECO:0000250" key="1"/>
<evidence type="ECO:0000250" key="2">
    <source>
        <dbReference type="UniProtKB" id="P00157"/>
    </source>
</evidence>
<evidence type="ECO:0000255" key="3">
    <source>
        <dbReference type="PROSITE-ProRule" id="PRU00967"/>
    </source>
</evidence>
<evidence type="ECO:0000255" key="4">
    <source>
        <dbReference type="PROSITE-ProRule" id="PRU00968"/>
    </source>
</evidence>
<comment type="function">
    <text evidence="2">Component of the ubiquinol-cytochrome c reductase complex (complex III or cytochrome b-c1 complex) that is part of the mitochondrial respiratory chain. The b-c1 complex mediates electron transfer from ubiquinol to cytochrome c. Contributes to the generation of a proton gradient across the mitochondrial membrane that is then used for ATP synthesis.</text>
</comment>
<comment type="cofactor">
    <cofactor evidence="2">
        <name>heme b</name>
        <dbReference type="ChEBI" id="CHEBI:60344"/>
    </cofactor>
    <text evidence="2">Binds 2 heme b groups non-covalently.</text>
</comment>
<comment type="subunit">
    <text evidence="2">The cytochrome bc1 complex contains 11 subunits: 3 respiratory subunits (MT-CYB, CYC1 and UQCRFS1), 2 core proteins (UQCRC1 and UQCRC2) and 6 low-molecular weight proteins (UQCRH/QCR6, UQCRB/QCR7, UQCRQ/QCR8, UQCR10/QCR9, UQCR11/QCR10 and a cleavage product of UQCRFS1). This cytochrome bc1 complex then forms a dimer.</text>
</comment>
<comment type="subcellular location">
    <subcellularLocation>
        <location evidence="2">Mitochondrion inner membrane</location>
        <topology evidence="2">Multi-pass membrane protein</topology>
    </subcellularLocation>
</comment>
<comment type="miscellaneous">
    <text evidence="1">Heme 1 (or BL or b562) is low-potential and absorbs at about 562 nm, and heme 2 (or BH or b566) is high-potential and absorbs at about 566 nm.</text>
</comment>
<comment type="similarity">
    <text evidence="3 4">Belongs to the cytochrome b family.</text>
</comment>
<comment type="caution">
    <text evidence="2">The full-length protein contains only eight transmembrane helices, not nine as predicted by bioinformatics tools.</text>
</comment>
<gene>
    <name type="primary">MT-CYB</name>
    <name type="synonym">COB</name>
    <name type="synonym">CYTB</name>
    <name type="synonym">MTCYB</name>
</gene>
<organism>
    <name type="scientific">Hoolock hoolock</name>
    <name type="common">Western hoolock gibbon</name>
    <name type="synonym">Bunopithecus hoolock</name>
    <dbReference type="NCBI Taxonomy" id="61851"/>
    <lineage>
        <taxon>Eukaryota</taxon>
        <taxon>Metazoa</taxon>
        <taxon>Chordata</taxon>
        <taxon>Craniata</taxon>
        <taxon>Vertebrata</taxon>
        <taxon>Euteleostomi</taxon>
        <taxon>Mammalia</taxon>
        <taxon>Eutheria</taxon>
        <taxon>Euarchontoglires</taxon>
        <taxon>Primates</taxon>
        <taxon>Haplorrhini</taxon>
        <taxon>Catarrhini</taxon>
        <taxon>Hylobatidae</taxon>
        <taxon>Hoolock</taxon>
    </lineage>
</organism>
<reference key="1">
    <citation type="journal article" date="1998" name="Mol. Phylogenet. Evol.">
        <title>Evolution of the gibbon subgenera inferred from cytochrome b DNA sequence data.</title>
        <authorList>
            <person name="Hall L.M."/>
            <person name="Jones D.S."/>
            <person name="Wood B.A."/>
        </authorList>
    </citation>
    <scope>NUCLEOTIDE SEQUENCE [GENOMIC DNA]</scope>
</reference>
<sequence length="380" mass="42763">MTPLRKTNPLMKLINHSLIDLPAPSNISMWWNFGSLLGTCLILQIITGLFLAMHYAPDASTAFSSVAHITRDVNYGWIIRHLHANGASMFFICLFLHIGRGLYYGSFLYLETWNIGIILLFATMATAFMGYVLPWGQMSFWGATVITNLLSAVPYIGTDLVQWVWGGYSVDNATLTRFFTFHFILPFIITTLATLHLLFLHETGSNNPLGISSQPDKITFHPYYTIKDILGLFLLLLILMSLVLFAPDLLGDPDNYIQANPLNTPPHIKPEWYFLFAYAILRSVPNKLGGVLALLLSILILVAIPTLHVAKQQSMMFRPLSQLTYWLLVTDLLTLTWIGGQPVSYPFITIGQVASVLYFTTILILMPIASLIENKMLKWT</sequence>